<evidence type="ECO:0000269" key="1">
    <source>
    </source>
</evidence>
<evidence type="ECO:0000269" key="2">
    <source>
    </source>
</evidence>
<evidence type="ECO:0000269" key="3">
    <source>
    </source>
</evidence>
<evidence type="ECO:0000269" key="4">
    <source>
    </source>
</evidence>
<evidence type="ECO:0000269" key="5">
    <source>
    </source>
</evidence>
<evidence type="ECO:0000269" key="6">
    <source>
    </source>
</evidence>
<evidence type="ECO:0000269" key="7">
    <source>
    </source>
</evidence>
<evidence type="ECO:0000303" key="8">
    <source>
    </source>
</evidence>
<evidence type="ECO:0000303" key="9">
    <source>
    </source>
</evidence>
<evidence type="ECO:0000305" key="10"/>
<evidence type="ECO:0000305" key="11">
    <source>
    </source>
</evidence>
<evidence type="ECO:0000305" key="12">
    <source>
    </source>
</evidence>
<name>NU160_ARATH</name>
<proteinExistence type="evidence at protein level"/>
<dbReference type="EMBL" id="AC051630">
    <property type="protein sequence ID" value="AAG51224.1"/>
    <property type="status" value="ALT_SEQ"/>
    <property type="molecule type" value="Genomic_DNA"/>
</dbReference>
<dbReference type="EMBL" id="CP002684">
    <property type="protein sequence ID" value="AEE31591.1"/>
    <property type="molecule type" value="Genomic_DNA"/>
</dbReference>
<dbReference type="PIR" id="G86457">
    <property type="entry name" value="G86457"/>
</dbReference>
<dbReference type="RefSeq" id="NP_001185129.1">
    <molecule id="Q9C811-2"/>
    <property type="nucleotide sequence ID" value="NM_001198200.2"/>
</dbReference>
<dbReference type="BioGRID" id="25468">
    <property type="interactions" value="13"/>
</dbReference>
<dbReference type="FunCoup" id="Q9C811">
    <property type="interactions" value="1948"/>
</dbReference>
<dbReference type="IntAct" id="Q9C811">
    <property type="interactions" value="1"/>
</dbReference>
<dbReference type="STRING" id="3702.Q9C811"/>
<dbReference type="iPTMnet" id="Q9C811"/>
<dbReference type="PaxDb" id="3702-AT1G33410.1"/>
<dbReference type="ProteomicsDB" id="248978">
    <molecule id="Q9C811-1"/>
</dbReference>
<dbReference type="EnsemblPlants" id="AT1G33410.2">
    <molecule id="Q9C811-2"/>
    <property type="protein sequence ID" value="AT1G33410.2"/>
    <property type="gene ID" value="AT1G33410"/>
</dbReference>
<dbReference type="GeneID" id="840234"/>
<dbReference type="Gramene" id="AT1G33410.2">
    <molecule id="Q9C811-2"/>
    <property type="protein sequence ID" value="AT1G33410.2"/>
    <property type="gene ID" value="AT1G33410"/>
</dbReference>
<dbReference type="KEGG" id="ath:AT1G33410"/>
<dbReference type="Araport" id="AT1G33410"/>
<dbReference type="TAIR" id="AT1G33410">
    <property type="gene designation" value="SAR1"/>
</dbReference>
<dbReference type="eggNOG" id="KOG4521">
    <property type="taxonomic scope" value="Eukaryota"/>
</dbReference>
<dbReference type="InParanoid" id="Q9C811"/>
<dbReference type="OMA" id="TIERLWC"/>
<dbReference type="CD-CODE" id="4299E36E">
    <property type="entry name" value="Nucleolus"/>
</dbReference>
<dbReference type="PRO" id="PR:Q9C811"/>
<dbReference type="Proteomes" id="UP000006548">
    <property type="component" value="Chromosome 1"/>
</dbReference>
<dbReference type="ExpressionAtlas" id="Q9C811">
    <property type="expression patterns" value="baseline and differential"/>
</dbReference>
<dbReference type="GO" id="GO:0005635">
    <property type="term" value="C:nuclear envelope"/>
    <property type="evidence" value="ECO:0000314"/>
    <property type="project" value="TAIR"/>
</dbReference>
<dbReference type="GO" id="GO:0031965">
    <property type="term" value="C:nuclear membrane"/>
    <property type="evidence" value="ECO:0000314"/>
    <property type="project" value="UniProtKB"/>
</dbReference>
<dbReference type="GO" id="GO:0005643">
    <property type="term" value="C:nuclear pore"/>
    <property type="evidence" value="ECO:0000314"/>
    <property type="project" value="TAIR"/>
</dbReference>
<dbReference type="GO" id="GO:0006952">
    <property type="term" value="P:defense response"/>
    <property type="evidence" value="ECO:0007669"/>
    <property type="project" value="UniProtKB-KW"/>
</dbReference>
<dbReference type="GO" id="GO:0032502">
    <property type="term" value="P:developmental process"/>
    <property type="evidence" value="ECO:0000315"/>
    <property type="project" value="TAIR"/>
</dbReference>
<dbReference type="GO" id="GO:0016973">
    <property type="term" value="P:poly(A)+ mRNA export from nucleus"/>
    <property type="evidence" value="ECO:0000315"/>
    <property type="project" value="UniProtKB"/>
</dbReference>
<dbReference type="GO" id="GO:0015031">
    <property type="term" value="P:protein transport"/>
    <property type="evidence" value="ECO:0007669"/>
    <property type="project" value="UniProtKB-KW"/>
</dbReference>
<dbReference type="GO" id="GO:0048510">
    <property type="term" value="P:regulation of timing of transition from vegetative to reproductive phase"/>
    <property type="evidence" value="ECO:0000315"/>
    <property type="project" value="TAIR"/>
</dbReference>
<dbReference type="GO" id="GO:0009733">
    <property type="term" value="P:response to auxin"/>
    <property type="evidence" value="ECO:0000316"/>
    <property type="project" value="UniProtKB"/>
</dbReference>
<dbReference type="GO" id="GO:0009409">
    <property type="term" value="P:response to cold"/>
    <property type="evidence" value="ECO:0000315"/>
    <property type="project" value="UniProtKB"/>
</dbReference>
<dbReference type="InterPro" id="IPR021717">
    <property type="entry name" value="Nucleoporin_Nup160"/>
</dbReference>
<dbReference type="InterPro" id="IPR035192">
    <property type="entry name" value="NUP160_hel_plant"/>
</dbReference>
<dbReference type="InterPro" id="IPR056536">
    <property type="entry name" value="TPR_NUP160_C"/>
</dbReference>
<dbReference type="InterPro" id="IPR056535">
    <property type="entry name" value="TPR_NUP160_M"/>
</dbReference>
<dbReference type="InterPro" id="IPR036322">
    <property type="entry name" value="WD40_repeat_dom_sf"/>
</dbReference>
<dbReference type="PANTHER" id="PTHR21286">
    <property type="entry name" value="NUCLEAR PORE COMPLEX PROTEIN NUP160"/>
    <property type="match status" value="1"/>
</dbReference>
<dbReference type="PANTHER" id="PTHR21286:SF0">
    <property type="entry name" value="NUCLEAR PORE COMPLEX PROTEIN NUP160"/>
    <property type="match status" value="1"/>
</dbReference>
<dbReference type="Pfam" id="PF11715">
    <property type="entry name" value="Beta-prop_Nup120_160"/>
    <property type="match status" value="1"/>
</dbReference>
<dbReference type="Pfam" id="PF17238">
    <property type="entry name" value="NUP160_helical_2"/>
    <property type="match status" value="1"/>
</dbReference>
<dbReference type="Pfam" id="PF23354">
    <property type="entry name" value="TPR_NUP160_120_M"/>
    <property type="match status" value="1"/>
</dbReference>
<dbReference type="Pfam" id="PF23347">
    <property type="entry name" value="TPR_Nup160_C"/>
    <property type="match status" value="1"/>
</dbReference>
<dbReference type="SUPFAM" id="SSF50978">
    <property type="entry name" value="WD40 repeat-like"/>
    <property type="match status" value="1"/>
</dbReference>
<comment type="function">
    <text evidence="1 2 3 5 6 7">Contributes to the transfer of mature mRNA from the nucleus to the cytosol. Required for both R gene-mediated and basal disease resistance. RNA export seems to play a critical role in stress responses and regulation of plant growth and development. Required for proper expression of factors associated with auxin signaling.</text>
</comment>
<comment type="subunit">
    <text evidence="12">Part of the nuclear pore complex (NPC). The NPC has an eight-fold symmetrical structure comprising a central transport channel and two rings, the cytoplasmic and nuclear rings, to which eight filaments are attached. The cytoplasmic filaments have loose ends, while the nuclear filaments are joined in a distal ring, forming a nuclear basket. NPCs are highly dynamic in configuration and composition, and can be devided in 3 subcomplexes, the NUP62 subcomplex, the NUP107-160 subcomplex and the NUP93 subcomplex, containing approximately 30 different nucleoporin proteins.</text>
</comment>
<comment type="subcellular location">
    <subcellularLocation>
        <location evidence="2 4 7">Nucleus membrane</location>
        <topology evidence="2">Peripheral membrane protein</topology>
        <orientation evidence="2">Nucleoplasmic side</orientation>
    </subcellularLocation>
    <subcellularLocation>
        <location evidence="11">Nucleus</location>
        <location evidence="11">Nuclear pore complex</location>
    </subcellularLocation>
</comment>
<comment type="alternative products">
    <event type="alternative splicing"/>
    <isoform>
        <id>Q9C811-1</id>
        <name>1</name>
        <sequence type="displayed"/>
    </isoform>
    <isoform>
        <id>Q9C811-2</id>
        <name>2</name>
        <sequence type="described" ref="VSP_057129"/>
    </isoform>
</comment>
<comment type="tissue specificity">
    <text evidence="1 2">Expressed in roots, stems, anthers, siliques and vascular tissues of cotyledons, leaves and hypocotyls.</text>
</comment>
<comment type="disruption phenotype">
    <text evidence="1 2 3 5 6">Pleiotropic phenotype with diverse growth defects and early flowering. Enhanced ethylene response and sensitivity to cold stress. Reduced EDS1 expression and enhanced susceptibility to virulent Pseudomonas bacteria and oomycete pathogens. Accumulation of nuclear poly(A)+ RNA and high-molecular weight SUMO conjugates.</text>
</comment>
<comment type="sequence caution" evidence="10">
    <conflict type="erroneous gene model prediction">
        <sequence resource="EMBL-CDS" id="AAG51224"/>
    </conflict>
</comment>
<feature type="chain" id="PRO_0000425595" description="Nuclear pore complex protein NUP160">
    <location>
        <begin position="1"/>
        <end position="1495"/>
    </location>
</feature>
<feature type="splice variant" id="VSP_057129" description="In isoform 2.">
    <original>L</original>
    <variation>LWGFVRLQCR</variation>
    <location>
        <position position="221"/>
    </location>
</feature>
<keyword id="KW-0025">Alternative splicing</keyword>
<keyword id="KW-0472">Membrane</keyword>
<keyword id="KW-0509">mRNA transport</keyword>
<keyword id="KW-0906">Nuclear pore complex</keyword>
<keyword id="KW-0539">Nucleus</keyword>
<keyword id="KW-0611">Plant defense</keyword>
<keyword id="KW-0653">Protein transport</keyword>
<keyword id="KW-1185">Reference proteome</keyword>
<keyword id="KW-0346">Stress response</keyword>
<keyword id="KW-0811">Translocation</keyword>
<keyword id="KW-0813">Transport</keyword>
<gene>
    <name evidence="9" type="primary">NUP160</name>
    <name evidence="8" type="synonym">SAR1</name>
    <name type="ordered locus">At1g33410</name>
    <name type="ORF">F10C21.8</name>
</gene>
<sequence>MEENRRNPSAGMEVPVAGGGNVVKWIEISVPSPSVSSSSIGANSSEDNECVQLPLSEDYASSSVIGEPSISFVWRINKTSPNALELLQLSAKSGFPITGLRFVFAQTLSPFAFVYADEGGDSGRLVYFLYSLTPSGVVYVLKLSNTLAYKSGSVFPLDHLIHLDVRPYLNESRVTSVAASPGFIFLGRSDGCVSCFQPIVYFQKSSGFHQELRDDTGFGRLGTVVAAVQDLFISEVHGRNYLCVLHADGALRVWDILTYSRVLCQSIAAKNLEGVMCVRLWLGKADYDSGIIPLAVLYRKSMNDSMDVITVYGLHFSSAEGIALSLDSGLQNIPLEEGELRDVRFTSDKIWTLKANELTSYMLCQKSSTMEAQSYTLQEDYISEQLFLSSRSSSHDLLLTTHSLFSSAKDQIMGFISSIFLRRLLCPGIFHNVALRLTLLDHNKNWTDSEFQSLSLDELTSEILLLVEHEVTAETSISVFHWWKNFCTSYLHHWCSNNEPRTLLVQSDVIGLVRNNSVSLFFRLENAEHSLGGSSSEHSNLTSLDLGVSHSDHEILAEVLRCTSKISKQWGGAPYAMYYESITGRPIISSDEIVPRLVNILESGYSTTIGQRTWSDLGADRAWEKELEAHKNLRTFSIDMLLSLSALCQRAGSWEKVFTIMEHYLQYLVPKKSMQKNDGEALSDICSSILVQATSQFVKVMFESAFDIFLLISYLLNIAGQVNMSQQDICKLRLELLPMIQDIVSEWLIILFFVTTPAESTSMEDFSLKLSSLQIDSSIDKRSWNAMLGKCGFSLAFILLFSDRSCIVDGRFNLRYLPSSQIITSLVQNFISWIRYSKTGDDSSSLLRRSTELSLRLIRNGQSDAVERILVVVEASLRGEKTFGCSQDTSGDWCLLQHLRGCCLLDQVQRGASGILRERKIIDAIRCFFRASSGEGSWKALHSLSKEAGFSPATTGPSILDGSTSSAAWKLHYYEWAMQIFERYNISEGACQFAYAALEQVDDAYNFIEMTEEFDPTKAATYTRGRLWANVFKFTLDLNLLNDAYCAIISNPDEEIKRICLRRFIIVLFECGKTKILSDGHLPFIGLTEKITQELFWKAGRSDIMMKPNPYKLLYAYEMRRHNWRMAASYMYQFSARLRSEGACKDYKHMSLVLQERLNGLSAAMNALALVHPGYAWIDPVPEETTRYPVKKARRAEEEQLRSNDQPKGEKSCIDIEKLQNEFVFTTAEYMLSLKNFGWTYSGLEKPPSDLVDLLVQANLYDMAFTVVLKFWRGSALKRELEKIFENMAIKCCPAKGTLWSSPNLMLTSNDEEVTHSPDRSPADQGSKLAGDWEILEVYLKRYIDIHARLPVSVASTLLQADSCIELPLWLIQMFKDGQKEKALGMAGQEASPASLFQLYVDYGRLTEATNLLLEYMESFASSKPAEVLKRKKVSGVWFPYTTVERLWWELEKTMNSGRMVEQCHKLKEQLHHALLNHLKLLKVDSNDAVSSATG</sequence>
<protein>
    <recommendedName>
        <fullName evidence="9">Nuclear pore complex protein NUP160</fullName>
        <shortName>AtNUP160</shortName>
    </recommendedName>
    <alternativeName>
        <fullName>Nucleoporin 160</fullName>
    </alternativeName>
    <alternativeName>
        <fullName evidence="8">Protein SUPPRESSOR OF AUXIN RESISTANCE 1</fullName>
    </alternativeName>
</protein>
<accession>Q9C811</accession>
<accession>F4HR72</accession>
<accession>F4HR73</accession>
<reference key="1">
    <citation type="journal article" date="2000" name="Nature">
        <title>Sequence and analysis of chromosome 1 of the plant Arabidopsis thaliana.</title>
        <authorList>
            <person name="Theologis A."/>
            <person name="Ecker J.R."/>
            <person name="Palm C.J."/>
            <person name="Federspiel N.A."/>
            <person name="Kaul S."/>
            <person name="White O."/>
            <person name="Alonso J."/>
            <person name="Altafi H."/>
            <person name="Araujo R."/>
            <person name="Bowman C.L."/>
            <person name="Brooks S.Y."/>
            <person name="Buehler E."/>
            <person name="Chan A."/>
            <person name="Chao Q."/>
            <person name="Chen H."/>
            <person name="Cheuk R.F."/>
            <person name="Chin C.W."/>
            <person name="Chung M.K."/>
            <person name="Conn L."/>
            <person name="Conway A.B."/>
            <person name="Conway A.R."/>
            <person name="Creasy T.H."/>
            <person name="Dewar K."/>
            <person name="Dunn P."/>
            <person name="Etgu P."/>
            <person name="Feldblyum T.V."/>
            <person name="Feng J.-D."/>
            <person name="Fong B."/>
            <person name="Fujii C.Y."/>
            <person name="Gill J.E."/>
            <person name="Goldsmith A.D."/>
            <person name="Haas B."/>
            <person name="Hansen N.F."/>
            <person name="Hughes B."/>
            <person name="Huizar L."/>
            <person name="Hunter J.L."/>
            <person name="Jenkins J."/>
            <person name="Johnson-Hopson C."/>
            <person name="Khan S."/>
            <person name="Khaykin E."/>
            <person name="Kim C.J."/>
            <person name="Koo H.L."/>
            <person name="Kremenetskaia I."/>
            <person name="Kurtz D.B."/>
            <person name="Kwan A."/>
            <person name="Lam B."/>
            <person name="Langin-Hooper S."/>
            <person name="Lee A."/>
            <person name="Lee J.M."/>
            <person name="Lenz C.A."/>
            <person name="Li J.H."/>
            <person name="Li Y.-P."/>
            <person name="Lin X."/>
            <person name="Liu S.X."/>
            <person name="Liu Z.A."/>
            <person name="Luros J.S."/>
            <person name="Maiti R."/>
            <person name="Marziali A."/>
            <person name="Militscher J."/>
            <person name="Miranda M."/>
            <person name="Nguyen M."/>
            <person name="Nierman W.C."/>
            <person name="Osborne B.I."/>
            <person name="Pai G."/>
            <person name="Peterson J."/>
            <person name="Pham P.K."/>
            <person name="Rizzo M."/>
            <person name="Rooney T."/>
            <person name="Rowley D."/>
            <person name="Sakano H."/>
            <person name="Salzberg S.L."/>
            <person name="Schwartz J.R."/>
            <person name="Shinn P."/>
            <person name="Southwick A.M."/>
            <person name="Sun H."/>
            <person name="Tallon L.J."/>
            <person name="Tambunga G."/>
            <person name="Toriumi M.J."/>
            <person name="Town C.D."/>
            <person name="Utterback T."/>
            <person name="Van Aken S."/>
            <person name="Vaysberg M."/>
            <person name="Vysotskaia V.S."/>
            <person name="Walker M."/>
            <person name="Wu D."/>
            <person name="Yu G."/>
            <person name="Fraser C.M."/>
            <person name="Venter J.C."/>
            <person name="Davis R.W."/>
        </authorList>
    </citation>
    <scope>NUCLEOTIDE SEQUENCE [LARGE SCALE GENOMIC DNA]</scope>
    <source>
        <strain>cv. Columbia</strain>
    </source>
</reference>
<reference key="2">
    <citation type="journal article" date="2017" name="Plant J.">
        <title>Araport11: a complete reannotation of the Arabidopsis thaliana reference genome.</title>
        <authorList>
            <person name="Cheng C.Y."/>
            <person name="Krishnakumar V."/>
            <person name="Chan A.P."/>
            <person name="Thibaud-Nissen F."/>
            <person name="Schobel S."/>
            <person name="Town C.D."/>
        </authorList>
    </citation>
    <scope>GENOME REANNOTATION</scope>
    <source>
        <strain>cv. Columbia</strain>
    </source>
</reference>
<reference key="3">
    <citation type="journal article" date="2006" name="Mol. Cell. Biol.">
        <title>A putative Arabidopsis nucleoporin, AtNUP160, is critical for RNA export and required for plant tolerance to cold stress.</title>
        <authorList>
            <person name="Dong C.H."/>
            <person name="Hu X."/>
            <person name="Tang W."/>
            <person name="Zheng X."/>
            <person name="Kim Y.S."/>
            <person name="Lee B.H."/>
            <person name="Zhu J.K."/>
        </authorList>
    </citation>
    <scope>FUNCTION</scope>
    <scope>SUBCELLULAR LOCATION</scope>
    <scope>TISSUE SPECIFICITY</scope>
    <scope>DISRUPTION PHENOTYPE</scope>
</reference>
<reference key="4">
    <citation type="journal article" date="2006" name="Plant Cell">
        <title>The Arabidopsis SUPPRESSOR OF AUXIN RESISTANCE proteins are nucleoporins with an important role in hormone signaling and development.</title>
        <authorList>
            <person name="Parry G."/>
            <person name="Ward S."/>
            <person name="Cernac A."/>
            <person name="Dharmasiri S."/>
            <person name="Estelle M."/>
        </authorList>
    </citation>
    <scope>FUNCTION</scope>
    <scope>TISSUE SPECIFICITY</scope>
    <scope>DISRUPTION PHENOTYPE</scope>
</reference>
<reference key="5">
    <citation type="journal article" date="2010" name="Plant Cell">
        <title>Identification and characterization of nuclear pore complex components in Arabidopsis thaliana.</title>
        <authorList>
            <person name="Tamura K."/>
            <person name="Fukao Y."/>
            <person name="Iwamoto M."/>
            <person name="Haraguchi T."/>
            <person name="Hara-Nishimura I."/>
        </authorList>
    </citation>
    <scope>IDENTIFICATION IN THE NUCLEAR PORE COMPLEX BY MASS SPECTROMETRY</scope>
    <scope>SUBCELLULAR LOCATION</scope>
    <scope>NOMENCLATURE</scope>
</reference>
<reference key="6">
    <citation type="journal article" date="2011" name="Planta">
        <title>Genetic and environmental changes in SUMO homeostasis lead to nuclear mRNA retention in plants.</title>
        <authorList>
            <person name="Muthuswamy S."/>
            <person name="Meier I."/>
        </authorList>
    </citation>
    <scope>FUNCTION</scope>
    <scope>DISRUPTION PHENOTYPE</scope>
</reference>
<reference key="7">
    <citation type="journal article" date="2012" name="J. Exp. Bot.">
        <title>A loss-of-function mutation in the nucleoporin AtNUP160 indicates that normal auxin signalling is required for a proper ethylene response in Arabidopsis.</title>
        <authorList>
            <person name="Robles L.M."/>
            <person name="Deslauriers S.D."/>
            <person name="Alvarez A.A."/>
            <person name="Larsen P.B."/>
        </authorList>
    </citation>
    <scope>FUNCTION</scope>
    <scope>DISRUPTION PHENOTYPE</scope>
</reference>
<reference key="8">
    <citation type="journal article" date="2012" name="Plant J.">
        <title>Putative members of the Arabidopsis Nup107-160 nuclear pore sub-complex contribute to pathogen defense.</title>
        <authorList>
            <person name="Wiermer M."/>
            <person name="Cheng Y.T."/>
            <person name="Imkampe J."/>
            <person name="Li M."/>
            <person name="Wang D."/>
            <person name="Lipka V."/>
            <person name="Li X."/>
        </authorList>
    </citation>
    <scope>FUNCTION</scope>
    <scope>DISRUPTION PHENOTYPE</scope>
</reference>
<reference key="9">
    <citation type="journal article" date="2012" name="Plant Signal. Behav.">
        <title>Nucleoporins Nup160 and Seh1 are required for disease resistance in Arabidopsis.</title>
        <authorList>
            <person name="Roth C."/>
            <person name="Wiermer M."/>
        </authorList>
    </citation>
    <scope>FUNCTION</scope>
    <scope>SUBCELLULAR LOCATION</scope>
</reference>
<organism>
    <name type="scientific">Arabidopsis thaliana</name>
    <name type="common">Mouse-ear cress</name>
    <dbReference type="NCBI Taxonomy" id="3702"/>
    <lineage>
        <taxon>Eukaryota</taxon>
        <taxon>Viridiplantae</taxon>
        <taxon>Streptophyta</taxon>
        <taxon>Embryophyta</taxon>
        <taxon>Tracheophyta</taxon>
        <taxon>Spermatophyta</taxon>
        <taxon>Magnoliopsida</taxon>
        <taxon>eudicotyledons</taxon>
        <taxon>Gunneridae</taxon>
        <taxon>Pentapetalae</taxon>
        <taxon>rosids</taxon>
        <taxon>malvids</taxon>
        <taxon>Brassicales</taxon>
        <taxon>Brassicaceae</taxon>
        <taxon>Camelineae</taxon>
        <taxon>Arabidopsis</taxon>
    </lineage>
</organism>